<proteinExistence type="evidence at transcript level"/>
<comment type="similarity">
    <text evidence="5">Belongs to the formin-like family. Class-II subfamily.</text>
</comment>
<comment type="sequence caution" evidence="5">
    <conflict type="erroneous gene model prediction">
        <sequence resource="EMBL-CDS" id="BAC99403"/>
    </conflict>
</comment>
<comment type="sequence caution" evidence="5">
    <conflict type="erroneous gene model prediction">
        <sequence resource="EMBL-CDS" id="BAC99532"/>
    </conflict>
</comment>
<comment type="sequence caution" evidence="5">
    <conflict type="erroneous gene model prediction">
        <sequence resource="EMBL-CDS" id="BAF23355"/>
    </conflict>
</comment>
<accession>Q6ZCX3</accession>
<accession>A3BRH2</accession>
<accession>Q0J6R0</accession>
<feature type="chain" id="PRO_0000319010" description="Formin-like protein 6">
    <location>
        <begin position="1"/>
        <end position="1364"/>
    </location>
</feature>
<feature type="domain" description="Phosphatase tensin-type" evidence="2">
    <location>
        <begin position="9"/>
        <end position="193"/>
    </location>
</feature>
<feature type="domain" description="C2 tensin-type" evidence="1">
    <location>
        <begin position="199"/>
        <end position="338"/>
    </location>
</feature>
<feature type="domain" description="FH2" evidence="3">
    <location>
        <begin position="922"/>
        <end position="1322"/>
    </location>
</feature>
<feature type="region of interest" description="Disordered" evidence="4">
    <location>
        <begin position="614"/>
        <end position="934"/>
    </location>
</feature>
<feature type="region of interest" description="Disordered" evidence="4">
    <location>
        <begin position="976"/>
        <end position="999"/>
    </location>
</feature>
<feature type="region of interest" description="Disordered" evidence="4">
    <location>
        <begin position="1317"/>
        <end position="1364"/>
    </location>
</feature>
<feature type="compositionally biased region" description="Pro residues" evidence="4">
    <location>
        <begin position="617"/>
        <end position="631"/>
    </location>
</feature>
<feature type="compositionally biased region" description="Polar residues" evidence="4">
    <location>
        <begin position="657"/>
        <end position="690"/>
    </location>
</feature>
<feature type="compositionally biased region" description="Pro residues" evidence="4">
    <location>
        <begin position="734"/>
        <end position="743"/>
    </location>
</feature>
<feature type="compositionally biased region" description="Low complexity" evidence="4">
    <location>
        <begin position="744"/>
        <end position="757"/>
    </location>
</feature>
<feature type="compositionally biased region" description="Pro residues" evidence="4">
    <location>
        <begin position="774"/>
        <end position="813"/>
    </location>
</feature>
<feature type="compositionally biased region" description="Pro residues" evidence="4">
    <location>
        <begin position="856"/>
        <end position="865"/>
    </location>
</feature>
<feature type="compositionally biased region" description="Polar residues" evidence="4">
    <location>
        <begin position="916"/>
        <end position="929"/>
    </location>
</feature>
<feature type="compositionally biased region" description="Basic and acidic residues" evidence="4">
    <location>
        <begin position="1317"/>
        <end position="1351"/>
    </location>
</feature>
<feature type="compositionally biased region" description="Polar residues" evidence="4">
    <location>
        <begin position="1353"/>
        <end position="1364"/>
    </location>
</feature>
<feature type="active site" description="Phosphocysteine intermediate" evidence="2">
    <location>
        <position position="126"/>
    </location>
</feature>
<feature type="sequence conflict" description="In Ref. 5; AK100610." evidence="5" ref="5">
    <original>S</original>
    <variation>P</variation>
    <location>
        <position position="917"/>
    </location>
</feature>
<organism>
    <name type="scientific">Oryza sativa subsp. japonica</name>
    <name type="common">Rice</name>
    <dbReference type="NCBI Taxonomy" id="39947"/>
    <lineage>
        <taxon>Eukaryota</taxon>
        <taxon>Viridiplantae</taxon>
        <taxon>Streptophyta</taxon>
        <taxon>Embryophyta</taxon>
        <taxon>Tracheophyta</taxon>
        <taxon>Spermatophyta</taxon>
        <taxon>Magnoliopsida</taxon>
        <taxon>Liliopsida</taxon>
        <taxon>Poales</taxon>
        <taxon>Poaceae</taxon>
        <taxon>BOP clade</taxon>
        <taxon>Oryzoideae</taxon>
        <taxon>Oryzeae</taxon>
        <taxon>Oryzinae</taxon>
        <taxon>Oryza</taxon>
        <taxon>Oryza sativa</taxon>
    </lineage>
</organism>
<sequence>MALFRKFFYRKPPDGLLEITERVYVFDSCFTTDVFNDDKYQDYIGDIVAQLQCHFADASFMVFNFREGESQSLLANILSSYEMVVMDYPRQYEGCPLVTIEMIHHFLRSGESWLSLSQQNVLIMHCERGGWAVLAFMLAGLLLYRKQYIGEQRTLEMIYRQAPRELIQLLSPLNPIPSQIRYLHYISRRNVSAVWPPGDRALTLDCVILRNIPGFNGEGGCRPIFRIYGKDPLLATSNTPKVLFSTPKRSKYVRLYKKVDCELIKIDIHCHIQGDVVLECISLDADQQREEMIFRVMFNTAFIRSNILMLNRDEIDILWDAKDRFPKEFRAEVLFSEMDSVNQLDSMEVGGIGEKEGLPVEAFAKVQEMFSNVDWLDPTADAAALLFQQLTSSENIQLRKGLLSPNKKDFHLSSISPTKKQSDNVEDKLSNAELSTIYVHKQENNDVQGLIPQKQATIPDEKSGSSVIHEKMISLVHEEITQVVDINTGCLSSLDMTVPSTMNSSRPVLIDQNSKLDDQFGSLQSSSPTMIMSQQFPVSRSSSVLSSDFSPRLLSACPRFHSAPSALGITALLEDHAAFGDTKNSVKVSSAVVKIPSKQSSQQHPITVTPVVTKCTPSPPPLLPPLAPVVPVPSDDQMISQEKDMSQQAQKHPDLSSFPSLSPTQQKQSTSKLCQTILPTNHQLSSSNITKEPLQISPAPTPPPLPTPSTSSSSSCHCLPPDSMLSTTTALFRPPAPPPPPLQSPSTPRCSPVRTLASPPPPPAPTSSPVRMSGPPPPPPPPAPNSCPSRPAPPPPPPPPLASTSSPPRPAAPSPCQLHTSTSSPARPVPPPPPTLSTIRSSAPTPPLLPGATSAPSPPPPPPPCSSSNQLSAPPPPPPSFSKNNGSIAPPPAPPGGNAKLPGMRGRGPAPPSGPMSRSLQSGQAASRRSNLKPLHWVKVTRAMQGSLWEESQKTDEASKPPVFDMSELEHLFSAVLPSSDGKRSDKSGSRASGSKPEKIHLIDLRRANNCGIMLTKVKMPLPDLMSAILTLDDTILDADQVENLIKFTPTKEEAELLKGYKGDKQVLGECEQFFMELMKLPRVDSKLRVFLFKIQFPSQVSDLKRSLNIVNSSAEEIRGSAKLKRIMQTILSLGNALNQGTARGSAVGFRLDSLLKLSDTRARNNKMTLMHYLSKVLSEKLPELLDFPKDLASLELAAKVQLKSLAEEMQAINKGLEKVEQELTTSENDGPVSEIFRKTLKDFLSGAEAEVRSLTSLYSNVGRNADALALYFGEDPARCPFEQVVITLQNFVRLFVRSHDENCKQLDLEKKKALKEAEAEKTKKEPENAQKTKEPGNDKAKHNNSIKELDISLQSPAQTASAK</sequence>
<protein>
    <recommendedName>
        <fullName>Formin-like protein 6</fullName>
    </recommendedName>
    <alternativeName>
        <fullName>OsFH6</fullName>
    </alternativeName>
</protein>
<keyword id="KW-0378">Hydrolase</keyword>
<keyword id="KW-0904">Protein phosphatase</keyword>
<keyword id="KW-1185">Reference proteome</keyword>
<dbReference type="EMBL" id="AP003936">
    <property type="protein sequence ID" value="BAC99403.1"/>
    <property type="status" value="ALT_SEQ"/>
    <property type="molecule type" value="Genomic_DNA"/>
</dbReference>
<dbReference type="EMBL" id="AP004556">
    <property type="protein sequence ID" value="BAC99532.1"/>
    <property type="status" value="ALT_SEQ"/>
    <property type="molecule type" value="Genomic_DNA"/>
</dbReference>
<dbReference type="EMBL" id="AP008214">
    <property type="protein sequence ID" value="BAF23355.1"/>
    <property type="status" value="ALT_SEQ"/>
    <property type="molecule type" value="Genomic_DNA"/>
</dbReference>
<dbReference type="EMBL" id="AP014964">
    <property type="status" value="NOT_ANNOTATED_CDS"/>
    <property type="molecule type" value="Genomic_DNA"/>
</dbReference>
<dbReference type="EMBL" id="CM000145">
    <property type="status" value="NOT_ANNOTATED_CDS"/>
    <property type="molecule type" value="Genomic_DNA"/>
</dbReference>
<dbReference type="EMBL" id="AK069036">
    <property type="status" value="NOT_ANNOTATED_CDS"/>
    <property type="molecule type" value="mRNA"/>
</dbReference>
<dbReference type="EMBL" id="AK100610">
    <property type="status" value="NOT_ANNOTATED_CDS"/>
    <property type="molecule type" value="mRNA"/>
</dbReference>
<dbReference type="RefSeq" id="XP_015648506.1">
    <property type="nucleotide sequence ID" value="XM_015793020.1"/>
</dbReference>
<dbReference type="RefSeq" id="XP_015648507.1">
    <property type="nucleotide sequence ID" value="XM_015793021.1"/>
</dbReference>
<dbReference type="RefSeq" id="XP_015648508.1">
    <property type="nucleotide sequence ID" value="XM_015793022.1"/>
</dbReference>
<dbReference type="RefSeq" id="XP_015648509.1">
    <property type="nucleotide sequence ID" value="XM_015793023.1"/>
</dbReference>
<dbReference type="RefSeq" id="XP_015648510.1">
    <property type="nucleotide sequence ID" value="XM_015793024.1"/>
</dbReference>
<dbReference type="SMR" id="Q6ZCX3"/>
<dbReference type="FunCoup" id="Q6ZCX3">
    <property type="interactions" value="755"/>
</dbReference>
<dbReference type="STRING" id="39947.Q6ZCX3"/>
<dbReference type="PaxDb" id="39947-Q6ZCX3"/>
<dbReference type="eggNOG" id="KOG1922">
    <property type="taxonomic scope" value="Eukaryota"/>
</dbReference>
<dbReference type="HOGENOM" id="CLU_291097_0_0_1"/>
<dbReference type="InParanoid" id="Q6ZCX3"/>
<dbReference type="OrthoDB" id="1668162at2759"/>
<dbReference type="Proteomes" id="UP000000763">
    <property type="component" value="Chromosome 8"/>
</dbReference>
<dbReference type="Proteomes" id="UP000007752">
    <property type="component" value="Chromosome 8"/>
</dbReference>
<dbReference type="Proteomes" id="UP000059680">
    <property type="component" value="Chromosome 8"/>
</dbReference>
<dbReference type="GO" id="GO:0004721">
    <property type="term" value="F:phosphoprotein phosphatase activity"/>
    <property type="evidence" value="ECO:0007669"/>
    <property type="project" value="UniProtKB-KW"/>
</dbReference>
<dbReference type="Gene3D" id="2.60.40.1110">
    <property type="match status" value="1"/>
</dbReference>
<dbReference type="Gene3D" id="1.20.58.2220">
    <property type="entry name" value="Formin, FH2 domain"/>
    <property type="match status" value="1"/>
</dbReference>
<dbReference type="Gene3D" id="3.90.190.10">
    <property type="entry name" value="Protein tyrosine phosphatase superfamily"/>
    <property type="match status" value="1"/>
</dbReference>
<dbReference type="InterPro" id="IPR035892">
    <property type="entry name" value="C2_domain_sf"/>
</dbReference>
<dbReference type="InterPro" id="IPR015425">
    <property type="entry name" value="FH2_Formin"/>
</dbReference>
<dbReference type="InterPro" id="IPR042201">
    <property type="entry name" value="FH2_Formin_sf"/>
</dbReference>
<dbReference type="InterPro" id="IPR051144">
    <property type="entry name" value="Formin_homology_domain"/>
</dbReference>
<dbReference type="InterPro" id="IPR029021">
    <property type="entry name" value="Prot-tyrosine_phosphatase-like"/>
</dbReference>
<dbReference type="InterPro" id="IPR014020">
    <property type="entry name" value="Tensin_C2-dom"/>
</dbReference>
<dbReference type="PANTHER" id="PTHR45733">
    <property type="entry name" value="FORMIN-J"/>
    <property type="match status" value="1"/>
</dbReference>
<dbReference type="PANTHER" id="PTHR45733:SF8">
    <property type="entry name" value="FORMIN-J"/>
    <property type="match status" value="1"/>
</dbReference>
<dbReference type="Pfam" id="PF02181">
    <property type="entry name" value="FH2"/>
    <property type="match status" value="1"/>
</dbReference>
<dbReference type="Pfam" id="PF10409">
    <property type="entry name" value="PTEN_C2"/>
    <property type="match status" value="1"/>
</dbReference>
<dbReference type="SMART" id="SM00498">
    <property type="entry name" value="FH2"/>
    <property type="match status" value="1"/>
</dbReference>
<dbReference type="SMART" id="SM01326">
    <property type="entry name" value="PTEN_C2"/>
    <property type="match status" value="1"/>
</dbReference>
<dbReference type="SUPFAM" id="SSF52799">
    <property type="entry name" value="(Phosphotyrosine protein) phosphatases II"/>
    <property type="match status" value="1"/>
</dbReference>
<dbReference type="SUPFAM" id="SSF49562">
    <property type="entry name" value="C2 domain (Calcium/lipid-binding domain, CaLB)"/>
    <property type="match status" value="1"/>
</dbReference>
<dbReference type="SUPFAM" id="SSF101447">
    <property type="entry name" value="Formin homology 2 domain (FH2 domain)"/>
    <property type="match status" value="1"/>
</dbReference>
<dbReference type="PROSITE" id="PS51182">
    <property type="entry name" value="C2_TENSIN"/>
    <property type="match status" value="1"/>
</dbReference>
<dbReference type="PROSITE" id="PS51444">
    <property type="entry name" value="FH2"/>
    <property type="match status" value="1"/>
</dbReference>
<dbReference type="PROSITE" id="PS51181">
    <property type="entry name" value="PPASE_TENSIN"/>
    <property type="match status" value="1"/>
</dbReference>
<name>FH6_ORYSJ</name>
<reference key="1">
    <citation type="journal article" date="2005" name="Nature">
        <title>The map-based sequence of the rice genome.</title>
        <authorList>
            <consortium name="International rice genome sequencing project (IRGSP)"/>
        </authorList>
    </citation>
    <scope>NUCLEOTIDE SEQUENCE [LARGE SCALE GENOMIC DNA]</scope>
    <source>
        <strain>cv. Nipponbare</strain>
    </source>
</reference>
<reference key="2">
    <citation type="journal article" date="2008" name="Nucleic Acids Res.">
        <title>The rice annotation project database (RAP-DB): 2008 update.</title>
        <authorList>
            <consortium name="The rice annotation project (RAP)"/>
        </authorList>
    </citation>
    <scope>GENOME REANNOTATION</scope>
    <source>
        <strain>cv. Nipponbare</strain>
    </source>
</reference>
<reference key="3">
    <citation type="journal article" date="2013" name="Rice">
        <title>Improvement of the Oryza sativa Nipponbare reference genome using next generation sequence and optical map data.</title>
        <authorList>
            <person name="Kawahara Y."/>
            <person name="de la Bastide M."/>
            <person name="Hamilton J.P."/>
            <person name="Kanamori H."/>
            <person name="McCombie W.R."/>
            <person name="Ouyang S."/>
            <person name="Schwartz D.C."/>
            <person name="Tanaka T."/>
            <person name="Wu J."/>
            <person name="Zhou S."/>
            <person name="Childs K.L."/>
            <person name="Davidson R.M."/>
            <person name="Lin H."/>
            <person name="Quesada-Ocampo L."/>
            <person name="Vaillancourt B."/>
            <person name="Sakai H."/>
            <person name="Lee S.S."/>
            <person name="Kim J."/>
            <person name="Numa H."/>
            <person name="Itoh T."/>
            <person name="Buell C.R."/>
            <person name="Matsumoto T."/>
        </authorList>
    </citation>
    <scope>GENOME REANNOTATION</scope>
    <source>
        <strain>cv. Nipponbare</strain>
    </source>
</reference>
<reference key="4">
    <citation type="journal article" date="2005" name="PLoS Biol.">
        <title>The genomes of Oryza sativa: a history of duplications.</title>
        <authorList>
            <person name="Yu J."/>
            <person name="Wang J."/>
            <person name="Lin W."/>
            <person name="Li S."/>
            <person name="Li H."/>
            <person name="Zhou J."/>
            <person name="Ni P."/>
            <person name="Dong W."/>
            <person name="Hu S."/>
            <person name="Zeng C."/>
            <person name="Zhang J."/>
            <person name="Zhang Y."/>
            <person name="Li R."/>
            <person name="Xu Z."/>
            <person name="Li S."/>
            <person name="Li X."/>
            <person name="Zheng H."/>
            <person name="Cong L."/>
            <person name="Lin L."/>
            <person name="Yin J."/>
            <person name="Geng J."/>
            <person name="Li G."/>
            <person name="Shi J."/>
            <person name="Liu J."/>
            <person name="Lv H."/>
            <person name="Li J."/>
            <person name="Wang J."/>
            <person name="Deng Y."/>
            <person name="Ran L."/>
            <person name="Shi X."/>
            <person name="Wang X."/>
            <person name="Wu Q."/>
            <person name="Li C."/>
            <person name="Ren X."/>
            <person name="Wang J."/>
            <person name="Wang X."/>
            <person name="Li D."/>
            <person name="Liu D."/>
            <person name="Zhang X."/>
            <person name="Ji Z."/>
            <person name="Zhao W."/>
            <person name="Sun Y."/>
            <person name="Zhang Z."/>
            <person name="Bao J."/>
            <person name="Han Y."/>
            <person name="Dong L."/>
            <person name="Ji J."/>
            <person name="Chen P."/>
            <person name="Wu S."/>
            <person name="Liu J."/>
            <person name="Xiao Y."/>
            <person name="Bu D."/>
            <person name="Tan J."/>
            <person name="Yang L."/>
            <person name="Ye C."/>
            <person name="Zhang J."/>
            <person name="Xu J."/>
            <person name="Zhou Y."/>
            <person name="Yu Y."/>
            <person name="Zhang B."/>
            <person name="Zhuang S."/>
            <person name="Wei H."/>
            <person name="Liu B."/>
            <person name="Lei M."/>
            <person name="Yu H."/>
            <person name="Li Y."/>
            <person name="Xu H."/>
            <person name="Wei S."/>
            <person name="He X."/>
            <person name="Fang L."/>
            <person name="Zhang Z."/>
            <person name="Zhang Y."/>
            <person name="Huang X."/>
            <person name="Su Z."/>
            <person name="Tong W."/>
            <person name="Li J."/>
            <person name="Tong Z."/>
            <person name="Li S."/>
            <person name="Ye J."/>
            <person name="Wang L."/>
            <person name="Fang L."/>
            <person name="Lei T."/>
            <person name="Chen C.-S."/>
            <person name="Chen H.-C."/>
            <person name="Xu Z."/>
            <person name="Li H."/>
            <person name="Huang H."/>
            <person name="Zhang F."/>
            <person name="Xu H."/>
            <person name="Li N."/>
            <person name="Zhao C."/>
            <person name="Li S."/>
            <person name="Dong L."/>
            <person name="Huang Y."/>
            <person name="Li L."/>
            <person name="Xi Y."/>
            <person name="Qi Q."/>
            <person name="Li W."/>
            <person name="Zhang B."/>
            <person name="Hu W."/>
            <person name="Zhang Y."/>
            <person name="Tian X."/>
            <person name="Jiao Y."/>
            <person name="Liang X."/>
            <person name="Jin J."/>
            <person name="Gao L."/>
            <person name="Zheng W."/>
            <person name="Hao B."/>
            <person name="Liu S.-M."/>
            <person name="Wang W."/>
            <person name="Yuan L."/>
            <person name="Cao M."/>
            <person name="McDermott J."/>
            <person name="Samudrala R."/>
            <person name="Wang J."/>
            <person name="Wong G.K.-S."/>
            <person name="Yang H."/>
        </authorList>
    </citation>
    <scope>NUCLEOTIDE SEQUENCE [LARGE SCALE GENOMIC DNA]</scope>
    <source>
        <strain>cv. Nipponbare</strain>
    </source>
</reference>
<reference key="5">
    <citation type="journal article" date="2003" name="Science">
        <title>Collection, mapping, and annotation of over 28,000 cDNA clones from japonica rice.</title>
        <authorList>
            <consortium name="The rice full-length cDNA consortium"/>
        </authorList>
    </citation>
    <scope>PARTIAL NUCLEOTIDE SEQUENCE [LARGE SCALE MRNA]</scope>
    <source>
        <strain>cv. Nipponbare</strain>
    </source>
</reference>
<reference key="6">
    <citation type="journal article" date="2004" name="BMC Genomics">
        <title>Formin homology 2 domains occur in multiple contexts in angiosperms.</title>
        <authorList>
            <person name="Cvrckova F."/>
            <person name="Novotny M."/>
            <person name="Pickova D."/>
            <person name="Zarsky V."/>
        </authorList>
    </citation>
    <scope>GENE FAMILY</scope>
    <scope>NOMENCLATURE</scope>
</reference>
<evidence type="ECO:0000255" key="1">
    <source>
        <dbReference type="PROSITE-ProRule" id="PRU00589"/>
    </source>
</evidence>
<evidence type="ECO:0000255" key="2">
    <source>
        <dbReference type="PROSITE-ProRule" id="PRU00590"/>
    </source>
</evidence>
<evidence type="ECO:0000255" key="3">
    <source>
        <dbReference type="PROSITE-ProRule" id="PRU00774"/>
    </source>
</evidence>
<evidence type="ECO:0000256" key="4">
    <source>
        <dbReference type="SAM" id="MobiDB-lite"/>
    </source>
</evidence>
<evidence type="ECO:0000305" key="5"/>
<gene>
    <name type="primary">FH6</name>
    <name type="ordered locus">Os08g0280200</name>
    <name type="ordered locus">LOC_Os08g17820</name>
    <name type="ORF">OJ1003_E05.5-1</name>
    <name type="ORF">OsJ_025644</name>
    <name type="ORF">P0026A08.31-1</name>
</gene>